<comment type="function">
    <text evidence="1">Has antimicrobial activity.</text>
</comment>
<comment type="subcellular location">
    <subcellularLocation>
        <location evidence="2">Secreted</location>
    </subcellularLocation>
</comment>
<comment type="tissue specificity">
    <text evidence="5">Expressed by the skin glands.</text>
</comment>
<comment type="mass spectrometry"/>
<comment type="similarity">
    <text evidence="4">Belongs to the frog skin active peptide (FSAP) family. Dermaseptin subfamily.</text>
</comment>
<sequence>GLWSKIKEAAKTAGKAAMGFVNEMV</sequence>
<name>DRS51_PHYTB</name>
<dbReference type="GO" id="GO:0005576">
    <property type="term" value="C:extracellular region"/>
    <property type="evidence" value="ECO:0007669"/>
    <property type="project" value="UniProtKB-SubCell"/>
</dbReference>
<dbReference type="GO" id="GO:0006952">
    <property type="term" value="P:defense response"/>
    <property type="evidence" value="ECO:0007669"/>
    <property type="project" value="UniProtKB-KW"/>
</dbReference>
<dbReference type="InterPro" id="IPR022731">
    <property type="entry name" value="Dermaseptin_dom"/>
</dbReference>
<dbReference type="Pfam" id="PF12121">
    <property type="entry name" value="DD_K"/>
    <property type="match status" value="1"/>
</dbReference>
<proteinExistence type="evidence at protein level"/>
<evidence type="ECO:0000250" key="1">
    <source>
        <dbReference type="UniProtKB" id="P84925"/>
    </source>
</evidence>
<evidence type="ECO:0000269" key="2">
    <source>
    </source>
</evidence>
<evidence type="ECO:0000303" key="3">
    <source>
    </source>
</evidence>
<evidence type="ECO:0000305" key="4"/>
<evidence type="ECO:0000305" key="5">
    <source>
    </source>
</evidence>
<accession>C0HLD0</accession>
<protein>
    <recommendedName>
        <fullName evidence="3">Dermaseptin-5.1TR</fullName>
    </recommendedName>
</protein>
<feature type="peptide" id="PRO_0000445217" description="Dermaseptin-5.1TR" evidence="2">
    <location>
        <begin position="1"/>
        <end position="25"/>
    </location>
</feature>
<feature type="modified residue" description="Valine amide" evidence="2">
    <location>
        <position position="25"/>
    </location>
</feature>
<reference evidence="4" key="1">
    <citation type="journal article" date="2018" name="Comp. Biochem. Physiol.">
        <title>Peptidomic analysis of the host-defense peptides in skin secretions of the Trinidadian leaf frog Phyllomedusa trinitatis (Phyllomedusidae).</title>
        <authorList>
            <person name="Mechkarska M."/>
            <person name="Coquet L."/>
            <person name="Leprince J."/>
            <person name="Auguste R.J."/>
            <person name="Jouenne T."/>
            <person name="Mangoni M.L."/>
            <person name="Conlon J.M."/>
        </authorList>
    </citation>
    <scope>PROTEIN SEQUENCE</scope>
    <scope>SUBCELLULAR LOCATION</scope>
    <scope>MASS SPECTROMETRY</scope>
    <scope>AMIDATION AT VAL-25</scope>
    <source>
        <tissue evidence="3">Skin secretion</tissue>
    </source>
</reference>
<keyword id="KW-0027">Amidation</keyword>
<keyword id="KW-0878">Amphibian defense peptide</keyword>
<keyword id="KW-0929">Antimicrobial</keyword>
<keyword id="KW-0903">Direct protein sequencing</keyword>
<keyword id="KW-0964">Secreted</keyword>
<organism evidence="3">
    <name type="scientific">Phyllomedusa trinitatis</name>
    <name type="common">Trinidad leaf frog</name>
    <dbReference type="NCBI Taxonomy" id="332092"/>
    <lineage>
        <taxon>Eukaryota</taxon>
        <taxon>Metazoa</taxon>
        <taxon>Chordata</taxon>
        <taxon>Craniata</taxon>
        <taxon>Vertebrata</taxon>
        <taxon>Euteleostomi</taxon>
        <taxon>Amphibia</taxon>
        <taxon>Batrachia</taxon>
        <taxon>Anura</taxon>
        <taxon>Neobatrachia</taxon>
        <taxon>Hyloidea</taxon>
        <taxon>Hylidae</taxon>
        <taxon>Phyllomedusinae</taxon>
        <taxon>Phyllomedusa</taxon>
    </lineage>
</organism>